<feature type="chain" id="PRO_0000300689" description="Putative uncharacterized protein LQK1">
    <location>
        <begin position="1"/>
        <end position="88"/>
    </location>
</feature>
<name>LQK1_HUMAN</name>
<sequence length="88" mass="10021">MARGLLHLRVGGRRPRGLCCWKKGSRSRPQERVLGSTSGKNWRRVTERSEGSKFIGIYSVRECKSSDCRRRNSRPSVVSLLRGSCEEL</sequence>
<gene>
    <name evidence="3" type="primary">FLVCR1-DT</name>
    <name evidence="3" type="synonym">FLVCR1-AS1</name>
    <name type="synonym">LQK1</name>
</gene>
<accession>Q8TAF5</accession>
<evidence type="ECO:0000269" key="1">
    <source>
    </source>
</evidence>
<evidence type="ECO:0000305" key="2"/>
<evidence type="ECO:0000312" key="3">
    <source>
        <dbReference type="HGNC" id="HGNC:39077"/>
    </source>
</evidence>
<proteinExistence type="uncertain"/>
<dbReference type="EMBL" id="AY030238">
    <property type="protein sequence ID" value="AAK51141.1"/>
    <property type="molecule type" value="mRNA"/>
</dbReference>
<dbReference type="EMBL" id="AY030239">
    <property type="protein sequence ID" value="AAK51142.1"/>
    <property type="molecule type" value="mRNA"/>
</dbReference>
<dbReference type="EMBL" id="AC104333">
    <property type="status" value="NOT_ANNOTATED_CDS"/>
    <property type="molecule type" value="Genomic_DNA"/>
</dbReference>
<dbReference type="iPTMnet" id="Q8TAF5"/>
<dbReference type="PhosphoSitePlus" id="Q8TAF5"/>
<dbReference type="BioMuta" id="HGNC:39077"/>
<dbReference type="MassIVE" id="Q8TAF5"/>
<dbReference type="AGR" id="HGNC:39077"/>
<dbReference type="GeneCards" id="FLVCR1-DT"/>
<dbReference type="HGNC" id="HGNC:39077">
    <property type="gene designation" value="FLVCR1-DT"/>
</dbReference>
<dbReference type="MIM" id="610864">
    <property type="type" value="gene"/>
</dbReference>
<dbReference type="neXtProt" id="NX_Q8TAF5"/>
<dbReference type="InParanoid" id="Q8TAF5"/>
<dbReference type="PAN-GO" id="Q8TAF5">
    <property type="GO annotations" value="0 GO annotations based on evolutionary models"/>
</dbReference>
<dbReference type="PhylomeDB" id="Q8TAF5"/>
<dbReference type="ChiTaRS" id="FLVCR1-DT">
    <property type="organism name" value="human"/>
</dbReference>
<dbReference type="Pharos" id="Q8TAF5">
    <property type="development level" value="Tdark"/>
</dbReference>
<dbReference type="Proteomes" id="UP000005640">
    <property type="component" value="Unplaced"/>
</dbReference>
<dbReference type="RNAct" id="Q8TAF5">
    <property type="molecule type" value="protein"/>
</dbReference>
<organism>
    <name type="scientific">Homo sapiens</name>
    <name type="common">Human</name>
    <dbReference type="NCBI Taxonomy" id="9606"/>
    <lineage>
        <taxon>Eukaryota</taxon>
        <taxon>Metazoa</taxon>
        <taxon>Chordata</taxon>
        <taxon>Craniata</taxon>
        <taxon>Vertebrata</taxon>
        <taxon>Euteleostomi</taxon>
        <taxon>Mammalia</taxon>
        <taxon>Eutheria</taxon>
        <taxon>Euarchontoglires</taxon>
        <taxon>Primates</taxon>
        <taxon>Haplorrhini</taxon>
        <taxon>Catarrhini</taxon>
        <taxon>Hominidae</taxon>
        <taxon>Homo</taxon>
    </lineage>
</organism>
<keyword id="KW-1185">Reference proteome</keyword>
<comment type="tissue specificity">
    <text evidence="1">Expressed in a wide variety of tissues.</text>
</comment>
<comment type="caution">
    <text evidence="2">Product of a dubious gene prediction.</text>
</comment>
<reference key="1">
    <citation type="journal article" date="2002" name="Gene">
        <title>Genomic structure and evolutionary context of the human feline leukemia virus subgroup C receptor (hFLVCR) gene: evidence for block duplications and de novo gene formation within duplicons of the hFLVCR locus.</title>
        <authorList>
            <person name="Lipovich L."/>
            <person name="Hughes A.L."/>
            <person name="King M.-C."/>
            <person name="Abkowitz J.L."/>
            <person name="Quigley J.G."/>
        </authorList>
    </citation>
    <scope>NUCLEOTIDE SEQUENCE [MRNA]</scope>
    <scope>TISSUE SPECIFICITY</scope>
</reference>
<reference key="2">
    <citation type="journal article" date="2006" name="Nature">
        <title>The DNA sequence and biological annotation of human chromosome 1.</title>
        <authorList>
            <person name="Gregory S.G."/>
            <person name="Barlow K.F."/>
            <person name="McLay K.E."/>
            <person name="Kaul R."/>
            <person name="Swarbreck D."/>
            <person name="Dunham A."/>
            <person name="Scott C.E."/>
            <person name="Howe K.L."/>
            <person name="Woodfine K."/>
            <person name="Spencer C.C.A."/>
            <person name="Jones M.C."/>
            <person name="Gillson C."/>
            <person name="Searle S."/>
            <person name="Zhou Y."/>
            <person name="Kokocinski F."/>
            <person name="McDonald L."/>
            <person name="Evans R."/>
            <person name="Phillips K."/>
            <person name="Atkinson A."/>
            <person name="Cooper R."/>
            <person name="Jones C."/>
            <person name="Hall R.E."/>
            <person name="Andrews T.D."/>
            <person name="Lloyd C."/>
            <person name="Ainscough R."/>
            <person name="Almeida J.P."/>
            <person name="Ambrose K.D."/>
            <person name="Anderson F."/>
            <person name="Andrew R.W."/>
            <person name="Ashwell R.I.S."/>
            <person name="Aubin K."/>
            <person name="Babbage A.K."/>
            <person name="Bagguley C.L."/>
            <person name="Bailey J."/>
            <person name="Beasley H."/>
            <person name="Bethel G."/>
            <person name="Bird C.P."/>
            <person name="Bray-Allen S."/>
            <person name="Brown J.Y."/>
            <person name="Brown A.J."/>
            <person name="Buckley D."/>
            <person name="Burton J."/>
            <person name="Bye J."/>
            <person name="Carder C."/>
            <person name="Chapman J.C."/>
            <person name="Clark S.Y."/>
            <person name="Clarke G."/>
            <person name="Clee C."/>
            <person name="Cobley V."/>
            <person name="Collier R.E."/>
            <person name="Corby N."/>
            <person name="Coville G.J."/>
            <person name="Davies J."/>
            <person name="Deadman R."/>
            <person name="Dunn M."/>
            <person name="Earthrowl M."/>
            <person name="Ellington A.G."/>
            <person name="Errington H."/>
            <person name="Frankish A."/>
            <person name="Frankland J."/>
            <person name="French L."/>
            <person name="Garner P."/>
            <person name="Garnett J."/>
            <person name="Gay L."/>
            <person name="Ghori M.R.J."/>
            <person name="Gibson R."/>
            <person name="Gilby L.M."/>
            <person name="Gillett W."/>
            <person name="Glithero R.J."/>
            <person name="Grafham D.V."/>
            <person name="Griffiths C."/>
            <person name="Griffiths-Jones S."/>
            <person name="Grocock R."/>
            <person name="Hammond S."/>
            <person name="Harrison E.S.I."/>
            <person name="Hart E."/>
            <person name="Haugen E."/>
            <person name="Heath P.D."/>
            <person name="Holmes S."/>
            <person name="Holt K."/>
            <person name="Howden P.J."/>
            <person name="Hunt A.R."/>
            <person name="Hunt S.E."/>
            <person name="Hunter G."/>
            <person name="Isherwood J."/>
            <person name="James R."/>
            <person name="Johnson C."/>
            <person name="Johnson D."/>
            <person name="Joy A."/>
            <person name="Kay M."/>
            <person name="Kershaw J.K."/>
            <person name="Kibukawa M."/>
            <person name="Kimberley A.M."/>
            <person name="King A."/>
            <person name="Knights A.J."/>
            <person name="Lad H."/>
            <person name="Laird G."/>
            <person name="Lawlor S."/>
            <person name="Leongamornlert D.A."/>
            <person name="Lloyd D.M."/>
            <person name="Loveland J."/>
            <person name="Lovell J."/>
            <person name="Lush M.J."/>
            <person name="Lyne R."/>
            <person name="Martin S."/>
            <person name="Mashreghi-Mohammadi M."/>
            <person name="Matthews L."/>
            <person name="Matthews N.S.W."/>
            <person name="McLaren S."/>
            <person name="Milne S."/>
            <person name="Mistry S."/>
            <person name="Moore M.J.F."/>
            <person name="Nickerson T."/>
            <person name="O'Dell C.N."/>
            <person name="Oliver K."/>
            <person name="Palmeiri A."/>
            <person name="Palmer S.A."/>
            <person name="Parker A."/>
            <person name="Patel D."/>
            <person name="Pearce A.V."/>
            <person name="Peck A.I."/>
            <person name="Pelan S."/>
            <person name="Phelps K."/>
            <person name="Phillimore B.J."/>
            <person name="Plumb R."/>
            <person name="Rajan J."/>
            <person name="Raymond C."/>
            <person name="Rouse G."/>
            <person name="Saenphimmachak C."/>
            <person name="Sehra H.K."/>
            <person name="Sheridan E."/>
            <person name="Shownkeen R."/>
            <person name="Sims S."/>
            <person name="Skuce C.D."/>
            <person name="Smith M."/>
            <person name="Steward C."/>
            <person name="Subramanian S."/>
            <person name="Sycamore N."/>
            <person name="Tracey A."/>
            <person name="Tromans A."/>
            <person name="Van Helmond Z."/>
            <person name="Wall M."/>
            <person name="Wallis J.M."/>
            <person name="White S."/>
            <person name="Whitehead S.L."/>
            <person name="Wilkinson J.E."/>
            <person name="Willey D.L."/>
            <person name="Williams H."/>
            <person name="Wilming L."/>
            <person name="Wray P.W."/>
            <person name="Wu Z."/>
            <person name="Coulson A."/>
            <person name="Vaudin M."/>
            <person name="Sulston J.E."/>
            <person name="Durbin R.M."/>
            <person name="Hubbard T."/>
            <person name="Wooster R."/>
            <person name="Dunham I."/>
            <person name="Carter N.P."/>
            <person name="McVean G."/>
            <person name="Ross M.T."/>
            <person name="Harrow J."/>
            <person name="Olson M.V."/>
            <person name="Beck S."/>
            <person name="Rogers J."/>
            <person name="Bentley D.R."/>
        </authorList>
    </citation>
    <scope>NUCLEOTIDE SEQUENCE [LARGE SCALE GENOMIC DNA]</scope>
</reference>
<protein>
    <recommendedName>
        <fullName evidence="2">Putative uncharacterized protein LQK1</fullName>
    </recommendedName>
    <alternativeName>
        <fullName evidence="3">FLVCR1 antisense RNA 1</fullName>
    </alternativeName>
    <alternativeName>
        <fullName evidence="3">FLVCR1 divergent transcript</fullName>
    </alternativeName>
</protein>